<evidence type="ECO:0000255" key="1">
    <source>
        <dbReference type="HAMAP-Rule" id="MF_00362"/>
    </source>
</evidence>
<evidence type="ECO:0000305" key="2"/>
<sequence length="176" mass="18542">MARPDKAAAVAELADQFRSSNAAVLTEYRGLTVAQLKTLRRSLGEDAQYAVVKNTLTKIAANEAGINTLDDLFNGPTAVAFITGDPVVSAKGLRDFAKDNPNLVIKGGVLDGKALSADEIKKLADLESREVLLAKLAGAFKGKQSQAASLFQALPSKFVRTAEALRAKKAEQGGAE</sequence>
<keyword id="KW-1185">Reference proteome</keyword>
<keyword id="KW-0687">Ribonucleoprotein</keyword>
<keyword id="KW-0689">Ribosomal protein</keyword>
<keyword id="KW-0694">RNA-binding</keyword>
<keyword id="KW-0699">rRNA-binding</keyword>
<gene>
    <name evidence="1" type="primary">rplJ</name>
    <name type="ordered locus">SAV_4912</name>
</gene>
<reference key="1">
    <citation type="journal article" date="2001" name="Proc. Natl. Acad. Sci. U.S.A.">
        <title>Genome sequence of an industrial microorganism Streptomyces avermitilis: deducing the ability of producing secondary metabolites.</title>
        <authorList>
            <person name="Omura S."/>
            <person name="Ikeda H."/>
            <person name="Ishikawa J."/>
            <person name="Hanamoto A."/>
            <person name="Takahashi C."/>
            <person name="Shinose M."/>
            <person name="Takahashi Y."/>
            <person name="Horikawa H."/>
            <person name="Nakazawa H."/>
            <person name="Osonoe T."/>
            <person name="Kikuchi H."/>
            <person name="Shiba T."/>
            <person name="Sakaki Y."/>
            <person name="Hattori M."/>
        </authorList>
    </citation>
    <scope>NUCLEOTIDE SEQUENCE [LARGE SCALE GENOMIC DNA]</scope>
    <source>
        <strain>ATCC 31267 / DSM 46492 / JCM 5070 / NBRC 14893 / NCIMB 12804 / NRRL 8165 / MA-4680</strain>
    </source>
</reference>
<reference key="2">
    <citation type="journal article" date="2003" name="Nat. Biotechnol.">
        <title>Complete genome sequence and comparative analysis of the industrial microorganism Streptomyces avermitilis.</title>
        <authorList>
            <person name="Ikeda H."/>
            <person name="Ishikawa J."/>
            <person name="Hanamoto A."/>
            <person name="Shinose M."/>
            <person name="Kikuchi H."/>
            <person name="Shiba T."/>
            <person name="Sakaki Y."/>
            <person name="Hattori M."/>
            <person name="Omura S."/>
        </authorList>
    </citation>
    <scope>NUCLEOTIDE SEQUENCE [LARGE SCALE GENOMIC DNA]</scope>
    <source>
        <strain>ATCC 31267 / DSM 46492 / JCM 5070 / NBRC 14893 / NCIMB 12804 / NRRL 8165 / MA-4680</strain>
    </source>
</reference>
<proteinExistence type="inferred from homology"/>
<organism>
    <name type="scientific">Streptomyces avermitilis (strain ATCC 31267 / DSM 46492 / JCM 5070 / NBRC 14893 / NCIMB 12804 / NRRL 8165 / MA-4680)</name>
    <dbReference type="NCBI Taxonomy" id="227882"/>
    <lineage>
        <taxon>Bacteria</taxon>
        <taxon>Bacillati</taxon>
        <taxon>Actinomycetota</taxon>
        <taxon>Actinomycetes</taxon>
        <taxon>Kitasatosporales</taxon>
        <taxon>Streptomycetaceae</taxon>
        <taxon>Streptomyces</taxon>
    </lineage>
</organism>
<feature type="chain" id="PRO_0000154718" description="Large ribosomal subunit protein uL10">
    <location>
        <begin position="1"/>
        <end position="176"/>
    </location>
</feature>
<name>RL10_STRAW</name>
<accession>Q82DQ7</accession>
<dbReference type="EMBL" id="BA000030">
    <property type="protein sequence ID" value="BAC72624.1"/>
    <property type="molecule type" value="Genomic_DNA"/>
</dbReference>
<dbReference type="RefSeq" id="WP_010986331.1">
    <property type="nucleotide sequence ID" value="NZ_JZJK01000077.1"/>
</dbReference>
<dbReference type="SMR" id="Q82DQ7"/>
<dbReference type="GeneID" id="41541996"/>
<dbReference type="KEGG" id="sma:SAVERM_4912"/>
<dbReference type="eggNOG" id="COG0244">
    <property type="taxonomic scope" value="Bacteria"/>
</dbReference>
<dbReference type="HOGENOM" id="CLU_092227_1_0_11"/>
<dbReference type="OrthoDB" id="3186107at2"/>
<dbReference type="Proteomes" id="UP000000428">
    <property type="component" value="Chromosome"/>
</dbReference>
<dbReference type="GO" id="GO:0015934">
    <property type="term" value="C:large ribosomal subunit"/>
    <property type="evidence" value="ECO:0007669"/>
    <property type="project" value="InterPro"/>
</dbReference>
<dbReference type="GO" id="GO:0070180">
    <property type="term" value="F:large ribosomal subunit rRNA binding"/>
    <property type="evidence" value="ECO:0007669"/>
    <property type="project" value="UniProtKB-UniRule"/>
</dbReference>
<dbReference type="GO" id="GO:0003735">
    <property type="term" value="F:structural constituent of ribosome"/>
    <property type="evidence" value="ECO:0007669"/>
    <property type="project" value="InterPro"/>
</dbReference>
<dbReference type="GO" id="GO:0006412">
    <property type="term" value="P:translation"/>
    <property type="evidence" value="ECO:0007669"/>
    <property type="project" value="UniProtKB-UniRule"/>
</dbReference>
<dbReference type="CDD" id="cd05797">
    <property type="entry name" value="Ribosomal_L10"/>
    <property type="match status" value="1"/>
</dbReference>
<dbReference type="FunFam" id="3.30.70.1730:FF:000003">
    <property type="entry name" value="50S ribosomal protein L10"/>
    <property type="match status" value="1"/>
</dbReference>
<dbReference type="Gene3D" id="3.30.70.1730">
    <property type="match status" value="1"/>
</dbReference>
<dbReference type="Gene3D" id="6.10.250.290">
    <property type="match status" value="1"/>
</dbReference>
<dbReference type="HAMAP" id="MF_00362">
    <property type="entry name" value="Ribosomal_uL10"/>
    <property type="match status" value="1"/>
</dbReference>
<dbReference type="InterPro" id="IPR001790">
    <property type="entry name" value="Ribosomal_uL10"/>
</dbReference>
<dbReference type="InterPro" id="IPR043141">
    <property type="entry name" value="Ribosomal_uL10-like_sf"/>
</dbReference>
<dbReference type="InterPro" id="IPR022973">
    <property type="entry name" value="Ribosomal_uL10_bac"/>
</dbReference>
<dbReference type="InterPro" id="IPR047865">
    <property type="entry name" value="Ribosomal_uL10_bac_type"/>
</dbReference>
<dbReference type="InterPro" id="IPR002363">
    <property type="entry name" value="Ribosomal_uL10_CS_bac"/>
</dbReference>
<dbReference type="NCBIfam" id="NF000955">
    <property type="entry name" value="PRK00099.1-1"/>
    <property type="match status" value="1"/>
</dbReference>
<dbReference type="PANTHER" id="PTHR11560">
    <property type="entry name" value="39S RIBOSOMAL PROTEIN L10, MITOCHONDRIAL"/>
    <property type="match status" value="1"/>
</dbReference>
<dbReference type="Pfam" id="PF00466">
    <property type="entry name" value="Ribosomal_L10"/>
    <property type="match status" value="1"/>
</dbReference>
<dbReference type="SUPFAM" id="SSF160369">
    <property type="entry name" value="Ribosomal protein L10-like"/>
    <property type="match status" value="1"/>
</dbReference>
<dbReference type="PROSITE" id="PS01109">
    <property type="entry name" value="RIBOSOMAL_L10"/>
    <property type="match status" value="1"/>
</dbReference>
<comment type="function">
    <text evidence="1">Forms part of the ribosomal stalk, playing a central role in the interaction of the ribosome with GTP-bound translation factors.</text>
</comment>
<comment type="subunit">
    <text evidence="1">Part of the ribosomal stalk of the 50S ribosomal subunit. The N-terminus interacts with L11 and the large rRNA to form the base of the stalk. The C-terminus forms an elongated spine to which L12 dimers bind in a sequential fashion forming a multimeric L10(L12)X complex.</text>
</comment>
<comment type="similarity">
    <text evidence="1">Belongs to the universal ribosomal protein uL10 family.</text>
</comment>
<protein>
    <recommendedName>
        <fullName evidence="1">Large ribosomal subunit protein uL10</fullName>
    </recommendedName>
    <alternativeName>
        <fullName evidence="2">50S ribosomal protein L10</fullName>
    </alternativeName>
</protein>